<gene>
    <name evidence="4" type="primary">AIG2LB</name>
    <name evidence="6" type="ordered locus">At5g39730</name>
    <name evidence="7" type="ORF">MKM21.4</name>
</gene>
<protein>
    <recommendedName>
        <fullName evidence="4">AIG2-like protein B</fullName>
        <ecNumber evidence="4">2.3.2.-</ecNumber>
    </recommendedName>
    <alternativeName>
        <fullName evidence="4">Avirulence-induced gene 2-like protein B</fullName>
    </alternativeName>
    <alternativeName>
        <fullName evidence="1">Putative gamma-glutamylcyclotransferase</fullName>
    </alternativeName>
</protein>
<evidence type="ECO:0000250" key="1">
    <source>
        <dbReference type="UniProtKB" id="O75223"/>
    </source>
</evidence>
<evidence type="ECO:0000256" key="2">
    <source>
        <dbReference type="SAM" id="MobiDB-lite"/>
    </source>
</evidence>
<evidence type="ECO:0000269" key="3">
    <source>
    </source>
</evidence>
<evidence type="ECO:0000305" key="4"/>
<evidence type="ECO:0000305" key="5">
    <source>
    </source>
</evidence>
<evidence type="ECO:0000312" key="6">
    <source>
        <dbReference type="Araport" id="AT5G39730"/>
    </source>
</evidence>
<evidence type="ECO:0000312" key="7">
    <source>
        <dbReference type="EMBL" id="BAB11379.1"/>
    </source>
</evidence>
<reference key="1">
    <citation type="journal article" date="1998" name="DNA Res.">
        <title>Structural analysis of Arabidopsis thaliana chromosome 5. VII. Sequence features of the regions of 1,013,767 bp covered by sixteen physically assigned P1 and TAC clones.</title>
        <authorList>
            <person name="Nakamura Y."/>
            <person name="Sato S."/>
            <person name="Asamizu E."/>
            <person name="Kaneko T."/>
            <person name="Kotani H."/>
            <person name="Miyajima N."/>
            <person name="Tabata S."/>
        </authorList>
    </citation>
    <scope>NUCLEOTIDE SEQUENCE [LARGE SCALE GENOMIC DNA]</scope>
    <source>
        <strain>cv. Columbia</strain>
    </source>
</reference>
<reference key="2">
    <citation type="journal article" date="2017" name="Plant J.">
        <title>Araport11: a complete reannotation of the Arabidopsis thaliana reference genome.</title>
        <authorList>
            <person name="Cheng C.Y."/>
            <person name="Krishnakumar V."/>
            <person name="Chan A.P."/>
            <person name="Thibaud-Nissen F."/>
            <person name="Schobel S."/>
            <person name="Town C.D."/>
        </authorList>
    </citation>
    <scope>GENOME REANNOTATION</scope>
    <source>
        <strain>cv. Columbia</strain>
    </source>
</reference>
<reference key="3">
    <citation type="journal article" date="2003" name="Science">
        <title>Empirical analysis of transcriptional activity in the Arabidopsis genome.</title>
        <authorList>
            <person name="Yamada K."/>
            <person name="Lim J."/>
            <person name="Dale J.M."/>
            <person name="Chen H."/>
            <person name="Shinn P."/>
            <person name="Palm C.J."/>
            <person name="Southwick A.M."/>
            <person name="Wu H.C."/>
            <person name="Kim C.J."/>
            <person name="Nguyen M."/>
            <person name="Pham P.K."/>
            <person name="Cheuk R.F."/>
            <person name="Karlin-Newmann G."/>
            <person name="Liu S.X."/>
            <person name="Lam B."/>
            <person name="Sakano H."/>
            <person name="Wu T."/>
            <person name="Yu G."/>
            <person name="Miranda M."/>
            <person name="Quach H.L."/>
            <person name="Tripp M."/>
            <person name="Chang C.H."/>
            <person name="Lee J.M."/>
            <person name="Toriumi M.J."/>
            <person name="Chan M.M."/>
            <person name="Tang C.C."/>
            <person name="Onodera C.S."/>
            <person name="Deng J.M."/>
            <person name="Akiyama K."/>
            <person name="Ansari Y."/>
            <person name="Arakawa T."/>
            <person name="Banh J."/>
            <person name="Banno F."/>
            <person name="Bowser L."/>
            <person name="Brooks S.Y."/>
            <person name="Carninci P."/>
            <person name="Chao Q."/>
            <person name="Choy N."/>
            <person name="Enju A."/>
            <person name="Goldsmith A.D."/>
            <person name="Gurjal M."/>
            <person name="Hansen N.F."/>
            <person name="Hayashizaki Y."/>
            <person name="Johnson-Hopson C."/>
            <person name="Hsuan V.W."/>
            <person name="Iida K."/>
            <person name="Karnes M."/>
            <person name="Khan S."/>
            <person name="Koesema E."/>
            <person name="Ishida J."/>
            <person name="Jiang P.X."/>
            <person name="Jones T."/>
            <person name="Kawai J."/>
            <person name="Kamiya A."/>
            <person name="Meyers C."/>
            <person name="Nakajima M."/>
            <person name="Narusaka M."/>
            <person name="Seki M."/>
            <person name="Sakurai T."/>
            <person name="Satou M."/>
            <person name="Tamse R."/>
            <person name="Vaysberg M."/>
            <person name="Wallender E.K."/>
            <person name="Wong C."/>
            <person name="Yamamura Y."/>
            <person name="Yuan S."/>
            <person name="Shinozaki K."/>
            <person name="Davis R.W."/>
            <person name="Theologis A."/>
            <person name="Ecker J.R."/>
        </authorList>
    </citation>
    <scope>NUCLEOTIDE SEQUENCE [LARGE SCALE MRNA]</scope>
    <source>
        <strain>cv. Columbia</strain>
    </source>
</reference>
<reference key="4">
    <citation type="journal article" date="2004" name="Mol. Cell. Proteomics">
        <title>Identification of new intrinsic proteins in Arabidopsis plasma membrane proteome.</title>
        <authorList>
            <person name="Marmagne A."/>
            <person name="Rouet M.-A."/>
            <person name="Ferro M."/>
            <person name="Rolland N."/>
            <person name="Alcon C."/>
            <person name="Joyard J."/>
            <person name="Garin J."/>
            <person name="Barbier-Brygoo H."/>
            <person name="Ephritikhine G."/>
        </authorList>
    </citation>
    <scope>IDENTIFICATION BY MASS SPECTROMETRY</scope>
    <scope>SUBCELLULAR LOCATION [LARGE SCALE ANALYSIS]</scope>
</reference>
<reference key="5">
    <citation type="journal article" date="2008" name="Proteins">
        <title>Solution structure of At3g28950 from Arabidopsis thaliana.</title>
        <authorList>
            <person name="de la Cruz N.B."/>
            <person name="Peterson F.C."/>
            <person name="Volkman B.F."/>
        </authorList>
    </citation>
    <scope>GENE FAMILY</scope>
</reference>
<accession>Q9FIX1</accession>
<comment type="function">
    <text evidence="1">Putative gamma-glutamylcyclotransferase.</text>
</comment>
<comment type="subcellular location">
    <subcellularLocation>
        <location evidence="3">Cell membrane</location>
    </subcellularLocation>
</comment>
<comment type="tissue specificity">
    <text evidence="5">Expressed in flowerss, leaves, stems, seeds and roots.</text>
</comment>
<comment type="developmental stage">
    <text evidence="5">Constitutive expression with an increase during flowering.</text>
</comment>
<comment type="induction">
    <text evidence="5">Expressed constitutively.</text>
</comment>
<comment type="similarity">
    <text evidence="4">Belongs to the gamma-glutamylcyclotransferase family.</text>
</comment>
<dbReference type="EC" id="2.3.2.-" evidence="4"/>
<dbReference type="EMBL" id="AB016876">
    <property type="protein sequence ID" value="BAB11379.1"/>
    <property type="molecule type" value="Genomic_DNA"/>
</dbReference>
<dbReference type="EMBL" id="CP002688">
    <property type="protein sequence ID" value="AED94468.1"/>
    <property type="molecule type" value="Genomic_DNA"/>
</dbReference>
<dbReference type="EMBL" id="AY035142">
    <property type="protein sequence ID" value="AAK59646.1"/>
    <property type="molecule type" value="mRNA"/>
</dbReference>
<dbReference type="EMBL" id="AY059076">
    <property type="protein sequence ID" value="AAL15182.1"/>
    <property type="molecule type" value="mRNA"/>
</dbReference>
<dbReference type="EMBL" id="AY081320">
    <property type="protein sequence ID" value="AAL91209.1"/>
    <property type="molecule type" value="mRNA"/>
</dbReference>
<dbReference type="EMBL" id="AY114688">
    <property type="protein sequence ID" value="AAM48007.1"/>
    <property type="molecule type" value="mRNA"/>
</dbReference>
<dbReference type="RefSeq" id="NP_198789.1">
    <property type="nucleotide sequence ID" value="NM_123335.4"/>
</dbReference>
<dbReference type="SMR" id="Q9FIX1"/>
<dbReference type="FunCoup" id="Q9FIX1">
    <property type="interactions" value="162"/>
</dbReference>
<dbReference type="IntAct" id="Q9FIX1">
    <property type="interactions" value="8"/>
</dbReference>
<dbReference type="STRING" id="3702.Q9FIX1"/>
<dbReference type="iPTMnet" id="Q9FIX1"/>
<dbReference type="PaxDb" id="3702-AT5G39730.1"/>
<dbReference type="ProteomicsDB" id="244890"/>
<dbReference type="EnsemblPlants" id="AT5G39730.1">
    <property type="protein sequence ID" value="AT5G39730.1"/>
    <property type="gene ID" value="AT5G39730"/>
</dbReference>
<dbReference type="GeneID" id="833969"/>
<dbReference type="Gramene" id="AT5G39730.1">
    <property type="protein sequence ID" value="AT5G39730.1"/>
    <property type="gene ID" value="AT5G39730"/>
</dbReference>
<dbReference type="KEGG" id="ath:AT5G39730"/>
<dbReference type="Araport" id="AT5G39730"/>
<dbReference type="TAIR" id="AT5G39730"/>
<dbReference type="eggNOG" id="ENOG502SWGU">
    <property type="taxonomic scope" value="Eukaryota"/>
</dbReference>
<dbReference type="HOGENOM" id="CLU_093936_0_0_1"/>
<dbReference type="InParanoid" id="Q9FIX1"/>
<dbReference type="OMA" id="EWKRNPQ"/>
<dbReference type="PhylomeDB" id="Q9FIX1"/>
<dbReference type="PRO" id="PR:Q9FIX1"/>
<dbReference type="Proteomes" id="UP000006548">
    <property type="component" value="Chromosome 5"/>
</dbReference>
<dbReference type="ExpressionAtlas" id="Q9FIX1">
    <property type="expression patterns" value="baseline and differential"/>
</dbReference>
<dbReference type="GO" id="GO:0005829">
    <property type="term" value="C:cytosol"/>
    <property type="evidence" value="ECO:0007005"/>
    <property type="project" value="TAIR"/>
</dbReference>
<dbReference type="GO" id="GO:0005886">
    <property type="term" value="C:plasma membrane"/>
    <property type="evidence" value="ECO:0007005"/>
    <property type="project" value="TAIR"/>
</dbReference>
<dbReference type="GO" id="GO:0009536">
    <property type="term" value="C:plastid"/>
    <property type="evidence" value="ECO:0007005"/>
    <property type="project" value="TAIR"/>
</dbReference>
<dbReference type="GO" id="GO:0016746">
    <property type="term" value="F:acyltransferase activity"/>
    <property type="evidence" value="ECO:0007669"/>
    <property type="project" value="UniProtKB-KW"/>
</dbReference>
<dbReference type="CDD" id="cd06661">
    <property type="entry name" value="GGCT_like"/>
    <property type="match status" value="1"/>
</dbReference>
<dbReference type="FunFam" id="3.10.490.10:FF:000022">
    <property type="entry name" value="Protein AIG2 B"/>
    <property type="match status" value="1"/>
</dbReference>
<dbReference type="Gene3D" id="6.10.250.210">
    <property type="match status" value="1"/>
</dbReference>
<dbReference type="Gene3D" id="3.10.490.10">
    <property type="entry name" value="Gamma-glutamyl cyclotransferase-like"/>
    <property type="match status" value="1"/>
</dbReference>
<dbReference type="InterPro" id="IPR045038">
    <property type="entry name" value="AIG2-like"/>
</dbReference>
<dbReference type="InterPro" id="IPR009288">
    <property type="entry name" value="AIG2-like_dom"/>
</dbReference>
<dbReference type="InterPro" id="IPR013024">
    <property type="entry name" value="GGCT-like"/>
</dbReference>
<dbReference type="InterPro" id="IPR036568">
    <property type="entry name" value="GGCT-like_sf"/>
</dbReference>
<dbReference type="PANTHER" id="PTHR31544:SF6">
    <property type="entry name" value="AIG2-LIKE PROTEIN A-RELATED"/>
    <property type="match status" value="1"/>
</dbReference>
<dbReference type="PANTHER" id="PTHR31544">
    <property type="entry name" value="AIG2-LIKE PROTEIN D"/>
    <property type="match status" value="1"/>
</dbReference>
<dbReference type="Pfam" id="PF06094">
    <property type="entry name" value="GGACT"/>
    <property type="match status" value="1"/>
</dbReference>
<dbReference type="SUPFAM" id="SSF110857">
    <property type="entry name" value="Gamma-glutamyl cyclotransferase-like"/>
    <property type="match status" value="1"/>
</dbReference>
<organism>
    <name type="scientific">Arabidopsis thaliana</name>
    <name type="common">Mouse-ear cress</name>
    <dbReference type="NCBI Taxonomy" id="3702"/>
    <lineage>
        <taxon>Eukaryota</taxon>
        <taxon>Viridiplantae</taxon>
        <taxon>Streptophyta</taxon>
        <taxon>Embryophyta</taxon>
        <taxon>Tracheophyta</taxon>
        <taxon>Spermatophyta</taxon>
        <taxon>Magnoliopsida</taxon>
        <taxon>eudicotyledons</taxon>
        <taxon>Gunneridae</taxon>
        <taxon>Pentapetalae</taxon>
        <taxon>rosids</taxon>
        <taxon>malvids</taxon>
        <taxon>Brassicales</taxon>
        <taxon>Brassicaceae</taxon>
        <taxon>Camelineae</taxon>
        <taxon>Arabidopsis</taxon>
    </lineage>
</organism>
<name>AIGLB_ARATH</name>
<keyword id="KW-0012">Acyltransferase</keyword>
<keyword id="KW-1003">Cell membrane</keyword>
<keyword id="KW-0472">Membrane</keyword>
<keyword id="KW-1185">Reference proteome</keyword>
<keyword id="KW-0808">Transferase</keyword>
<sequence length="172" mass="20018">MSSSDSPQLHNIFVYGSFQEPDIIHVMLNRIPEIVSATLPGFKRFRLKGRLYPCIIPSENGEVHGKVLMGLTNDELENVDWVEGNEYERVFVEVVRKDNSEKMRVETYPWINKNDPDIGGEWDFEEWKRLHMKTFIEAFTEIMERKRNPQGKGRDDFSNVLKEEDPANAPSS</sequence>
<feature type="chain" id="PRO_0000438022" description="AIG2-like protein B">
    <location>
        <begin position="1"/>
        <end position="172"/>
    </location>
</feature>
<feature type="region of interest" description="Disordered" evidence="2">
    <location>
        <begin position="146"/>
        <end position="172"/>
    </location>
</feature>
<feature type="compositionally biased region" description="Basic and acidic residues" evidence="2">
    <location>
        <begin position="146"/>
        <end position="165"/>
    </location>
</feature>
<feature type="active site" description="Proton acceptor" evidence="1">
    <location>
        <position position="83"/>
    </location>
</feature>
<feature type="binding site" evidence="1">
    <location>
        <begin position="15"/>
        <end position="20"/>
    </location>
    <ligand>
        <name>substrate</name>
    </ligand>
</feature>
<proteinExistence type="evidence at protein level"/>